<sequence length="133" mass="15065">MQRVTITLDDDLLETLDSLSQRRGYNNRSEAIRDILRGALAQEATQEHGTQGFAVLSYVYEHEKRDLASRIVSTQHHHHDLSVATLHVHINHDDCLEIAVLKGDMGDVQHFADDVIAQRGVRHGHLQCLPKED</sequence>
<gene>
    <name evidence="1" type="primary">nikR</name>
    <name type="ordered locus">SCH_3513</name>
</gene>
<comment type="function">
    <text evidence="1">Transcriptional repressor of the nikABCDE operon. Is active in the presence of excessive concentrations of intracellular nickel.</text>
</comment>
<comment type="cofactor">
    <cofactor evidence="1">
        <name>Ni(2+)</name>
        <dbReference type="ChEBI" id="CHEBI:49786"/>
    </cofactor>
    <text evidence="1">Binds 1 nickel ion per subunit.</text>
</comment>
<comment type="subunit">
    <text evidence="1">Homotetramer.</text>
</comment>
<comment type="similarity">
    <text evidence="1">Belongs to the transcriptional regulatory CopG/NikR family.</text>
</comment>
<comment type="sequence caution" evidence="2">
    <conflict type="erroneous initiation">
        <sequence resource="EMBL-CDS" id="AAX67419"/>
    </conflict>
</comment>
<reference key="1">
    <citation type="journal article" date="2005" name="Nucleic Acids Res.">
        <title>The genome sequence of Salmonella enterica serovar Choleraesuis, a highly invasive and resistant zoonotic pathogen.</title>
        <authorList>
            <person name="Chiu C.-H."/>
            <person name="Tang P."/>
            <person name="Chu C."/>
            <person name="Hu S."/>
            <person name="Bao Q."/>
            <person name="Yu J."/>
            <person name="Chou Y.-Y."/>
            <person name="Wang H.-S."/>
            <person name="Lee Y.-S."/>
        </authorList>
    </citation>
    <scope>NUCLEOTIDE SEQUENCE [LARGE SCALE GENOMIC DNA]</scope>
    <source>
        <strain>SC-B67</strain>
    </source>
</reference>
<protein>
    <recommendedName>
        <fullName evidence="1">Nickel-responsive regulator</fullName>
    </recommendedName>
</protein>
<keyword id="KW-0238">DNA-binding</keyword>
<keyword id="KW-0479">Metal-binding</keyword>
<keyword id="KW-0533">Nickel</keyword>
<keyword id="KW-0678">Repressor</keyword>
<keyword id="KW-0804">Transcription</keyword>
<keyword id="KW-0805">Transcription regulation</keyword>
<dbReference type="EMBL" id="AE017220">
    <property type="protein sequence ID" value="AAX67419.1"/>
    <property type="status" value="ALT_INIT"/>
    <property type="molecule type" value="Genomic_DNA"/>
</dbReference>
<dbReference type="RefSeq" id="WP_001190057.1">
    <property type="nucleotide sequence ID" value="NC_006905.1"/>
</dbReference>
<dbReference type="SMR" id="Q57IP3"/>
<dbReference type="KEGG" id="sec:SCH_3513"/>
<dbReference type="HOGENOM" id="CLU_113319_1_4_6"/>
<dbReference type="Proteomes" id="UP000000538">
    <property type="component" value="Chromosome"/>
</dbReference>
<dbReference type="GO" id="GO:0003700">
    <property type="term" value="F:DNA-binding transcription factor activity"/>
    <property type="evidence" value="ECO:0007669"/>
    <property type="project" value="UniProtKB-UniRule"/>
</dbReference>
<dbReference type="GO" id="GO:0016151">
    <property type="term" value="F:nickel cation binding"/>
    <property type="evidence" value="ECO:0007669"/>
    <property type="project" value="UniProtKB-UniRule"/>
</dbReference>
<dbReference type="GO" id="GO:0043565">
    <property type="term" value="F:sequence-specific DNA binding"/>
    <property type="evidence" value="ECO:0007669"/>
    <property type="project" value="UniProtKB-ARBA"/>
</dbReference>
<dbReference type="GO" id="GO:0010045">
    <property type="term" value="P:response to nickel cation"/>
    <property type="evidence" value="ECO:0007669"/>
    <property type="project" value="InterPro"/>
</dbReference>
<dbReference type="CDD" id="cd22231">
    <property type="entry name" value="RHH_NikR_HicB-like"/>
    <property type="match status" value="1"/>
</dbReference>
<dbReference type="FunFam" id="1.10.1220.10:FF:000001">
    <property type="entry name" value="Nickel-responsive regulator"/>
    <property type="match status" value="1"/>
</dbReference>
<dbReference type="FunFam" id="3.30.70.1150:FF:000002">
    <property type="entry name" value="Nickel-responsive regulator"/>
    <property type="match status" value="1"/>
</dbReference>
<dbReference type="Gene3D" id="3.30.70.1150">
    <property type="entry name" value="ACT-like. Chain A, domain 2"/>
    <property type="match status" value="1"/>
</dbReference>
<dbReference type="Gene3D" id="1.10.1220.10">
    <property type="entry name" value="Met repressor-like"/>
    <property type="match status" value="1"/>
</dbReference>
<dbReference type="HAMAP" id="MF_00476">
    <property type="entry name" value="NikR"/>
    <property type="match status" value="1"/>
</dbReference>
<dbReference type="InterPro" id="IPR027271">
    <property type="entry name" value="Acetolactate_synth/TF_NikR_C"/>
</dbReference>
<dbReference type="InterPro" id="IPR045865">
    <property type="entry name" value="ACT-like_dom_sf"/>
</dbReference>
<dbReference type="InterPro" id="IPR013321">
    <property type="entry name" value="Arc_rbn_hlx_hlx"/>
</dbReference>
<dbReference type="InterPro" id="IPR002145">
    <property type="entry name" value="CopG"/>
</dbReference>
<dbReference type="InterPro" id="IPR050192">
    <property type="entry name" value="CopG/NikR_regulator"/>
</dbReference>
<dbReference type="InterPro" id="IPR022988">
    <property type="entry name" value="Ni_resp_reg_NikR"/>
</dbReference>
<dbReference type="InterPro" id="IPR014160">
    <property type="entry name" value="Nickel_NikR_proteobac"/>
</dbReference>
<dbReference type="InterPro" id="IPR010985">
    <property type="entry name" value="Ribbon_hlx_hlx"/>
</dbReference>
<dbReference type="InterPro" id="IPR014864">
    <property type="entry name" value="TF_NikR_Ni-bd_C"/>
</dbReference>
<dbReference type="NCBIfam" id="TIGR02793">
    <property type="entry name" value="nikR"/>
    <property type="match status" value="1"/>
</dbReference>
<dbReference type="NCBIfam" id="NF002815">
    <property type="entry name" value="PRK02967.1"/>
    <property type="match status" value="1"/>
</dbReference>
<dbReference type="NCBIfam" id="NF003381">
    <property type="entry name" value="PRK04460.1"/>
    <property type="match status" value="1"/>
</dbReference>
<dbReference type="PANTHER" id="PTHR34719">
    <property type="entry name" value="NICKEL-RESPONSIVE REGULATOR"/>
    <property type="match status" value="1"/>
</dbReference>
<dbReference type="PANTHER" id="PTHR34719:SF2">
    <property type="entry name" value="NICKEL-RESPONSIVE REGULATOR"/>
    <property type="match status" value="1"/>
</dbReference>
<dbReference type="Pfam" id="PF08753">
    <property type="entry name" value="NikR_C"/>
    <property type="match status" value="1"/>
</dbReference>
<dbReference type="Pfam" id="PF01402">
    <property type="entry name" value="RHH_1"/>
    <property type="match status" value="1"/>
</dbReference>
<dbReference type="SUPFAM" id="SSF55021">
    <property type="entry name" value="ACT-like"/>
    <property type="match status" value="1"/>
</dbReference>
<dbReference type="SUPFAM" id="SSF47598">
    <property type="entry name" value="Ribbon-helix-helix"/>
    <property type="match status" value="1"/>
</dbReference>
<accession>Q57IP3</accession>
<proteinExistence type="inferred from homology"/>
<name>NIKR_SALCH</name>
<organism>
    <name type="scientific">Salmonella choleraesuis (strain SC-B67)</name>
    <dbReference type="NCBI Taxonomy" id="321314"/>
    <lineage>
        <taxon>Bacteria</taxon>
        <taxon>Pseudomonadati</taxon>
        <taxon>Pseudomonadota</taxon>
        <taxon>Gammaproteobacteria</taxon>
        <taxon>Enterobacterales</taxon>
        <taxon>Enterobacteriaceae</taxon>
        <taxon>Salmonella</taxon>
    </lineage>
</organism>
<evidence type="ECO:0000255" key="1">
    <source>
        <dbReference type="HAMAP-Rule" id="MF_00476"/>
    </source>
</evidence>
<evidence type="ECO:0000305" key="2"/>
<feature type="chain" id="PRO_0000139277" description="Nickel-responsive regulator">
    <location>
        <begin position="1"/>
        <end position="133"/>
    </location>
</feature>
<feature type="binding site" evidence="1">
    <location>
        <position position="76"/>
    </location>
    <ligand>
        <name>Ni(2+)</name>
        <dbReference type="ChEBI" id="CHEBI:49786"/>
    </ligand>
</feature>
<feature type="binding site" evidence="1">
    <location>
        <position position="87"/>
    </location>
    <ligand>
        <name>Ni(2+)</name>
        <dbReference type="ChEBI" id="CHEBI:49786"/>
    </ligand>
</feature>
<feature type="binding site" evidence="1">
    <location>
        <position position="89"/>
    </location>
    <ligand>
        <name>Ni(2+)</name>
        <dbReference type="ChEBI" id="CHEBI:49786"/>
    </ligand>
</feature>
<feature type="binding site" evidence="1">
    <location>
        <position position="95"/>
    </location>
    <ligand>
        <name>Ni(2+)</name>
        <dbReference type="ChEBI" id="CHEBI:49786"/>
    </ligand>
</feature>